<comment type="function">
    <text evidence="1">Chaperone involved in the maturation of iron-sulfur cluster-containing proteins. Has a low intrinsic ATPase activity which is markedly stimulated by HscB.</text>
</comment>
<comment type="similarity">
    <text evidence="1">Belongs to the heat shock protein 70 family.</text>
</comment>
<sequence>MQIIEIREPEQADFKQEQQIAVGIDFGTTNSLIAIAANRKVKVIKSIDDKELIPTTIDFTSNNFTIGNNKGLRSIKRLFGKTLKEILNTPALFSLVKDYLDVNSSELKLNFANKQLRVPEIAAEIFIYLKNQAEEQLKTNLTKAVITVPAHFNDAARGEVMLAAKIAGFEVLRLIAEPTAAAYAYGLNNNQKGCYLVYDLGGGTFDVSILNIQEGIFQVIATNGDNMLGGNDIDVVITQYLCNKFDLPNSIDTLQLAKKAKETLTYKDSFNNDNVSINKQTLEQLILPLVERTINIAQECLEQAGNPNIDGVILVGGATRTPLIKDELYKAFKIDILSDIDPDKAVVWGAALQAENLIAPHTNSLLIDVAPLSLGMELYGGIVEKIIMHNTPIPISVVKEFTTYVDNQTGIQFHILQGEREMAADCRSLARFELKGLPPMKAGYIRAEVTFSIDADGILSVSAYEKISNTSHAIEVKPNHGIDKTEIDIMLENAYKNAKIDYTTRLLQEAVIEAEALIFSIERAIAELTTLLSESEISIINSLLDNIKEAVHARDWILINNSIKEFKSKIKKSMDTKFNIIINDLLKGKNINQIK</sequence>
<feature type="chain" id="PRO_1000212533" description="Chaperone protein HscA homolog">
    <location>
        <begin position="1"/>
        <end position="595"/>
    </location>
</feature>
<gene>
    <name evidence="1" type="primary">hscA</name>
    <name type="ordered locus">RPR_01965</name>
</gene>
<proteinExistence type="inferred from homology"/>
<dbReference type="EMBL" id="CP001227">
    <property type="protein sequence ID" value="ACR47248.1"/>
    <property type="molecule type" value="Genomic_DNA"/>
</dbReference>
<dbReference type="RefSeq" id="WP_012736525.1">
    <property type="nucleotide sequence ID" value="NC_012730.1"/>
</dbReference>
<dbReference type="SMR" id="C4K0Z7"/>
<dbReference type="KEGG" id="rpk:RPR_01965"/>
<dbReference type="HOGENOM" id="CLU_005965_2_4_5"/>
<dbReference type="Proteomes" id="UP000005015">
    <property type="component" value="Chromosome"/>
</dbReference>
<dbReference type="GO" id="GO:0005524">
    <property type="term" value="F:ATP binding"/>
    <property type="evidence" value="ECO:0007669"/>
    <property type="project" value="UniProtKB-KW"/>
</dbReference>
<dbReference type="GO" id="GO:0016887">
    <property type="term" value="F:ATP hydrolysis activity"/>
    <property type="evidence" value="ECO:0007669"/>
    <property type="project" value="UniProtKB-UniRule"/>
</dbReference>
<dbReference type="GO" id="GO:0140662">
    <property type="term" value="F:ATP-dependent protein folding chaperone"/>
    <property type="evidence" value="ECO:0007669"/>
    <property type="project" value="InterPro"/>
</dbReference>
<dbReference type="GO" id="GO:0051082">
    <property type="term" value="F:unfolded protein binding"/>
    <property type="evidence" value="ECO:0007669"/>
    <property type="project" value="InterPro"/>
</dbReference>
<dbReference type="GO" id="GO:0016226">
    <property type="term" value="P:iron-sulfur cluster assembly"/>
    <property type="evidence" value="ECO:0007669"/>
    <property type="project" value="InterPro"/>
</dbReference>
<dbReference type="FunFam" id="1.20.1270.10:FF:000058">
    <property type="entry name" value="Chaperone protein HscA homolog"/>
    <property type="match status" value="1"/>
</dbReference>
<dbReference type="Gene3D" id="1.20.1270.10">
    <property type="match status" value="1"/>
</dbReference>
<dbReference type="Gene3D" id="3.30.420.40">
    <property type="match status" value="2"/>
</dbReference>
<dbReference type="Gene3D" id="3.90.640.10">
    <property type="entry name" value="Actin, Chain A, domain 4"/>
    <property type="match status" value="1"/>
</dbReference>
<dbReference type="Gene3D" id="2.60.34.10">
    <property type="entry name" value="Substrate Binding Domain Of DNAk, Chain A, domain 1"/>
    <property type="match status" value="1"/>
</dbReference>
<dbReference type="HAMAP" id="MF_00679">
    <property type="entry name" value="HscA"/>
    <property type="match status" value="1"/>
</dbReference>
<dbReference type="InterPro" id="IPR043129">
    <property type="entry name" value="ATPase_NBD"/>
</dbReference>
<dbReference type="InterPro" id="IPR018181">
    <property type="entry name" value="Heat_shock_70_CS"/>
</dbReference>
<dbReference type="InterPro" id="IPR029048">
    <property type="entry name" value="HSP70_C_sf"/>
</dbReference>
<dbReference type="InterPro" id="IPR029047">
    <property type="entry name" value="HSP70_peptide-bd_sf"/>
</dbReference>
<dbReference type="InterPro" id="IPR013126">
    <property type="entry name" value="Hsp_70_fam"/>
</dbReference>
<dbReference type="InterPro" id="IPR010236">
    <property type="entry name" value="ISC_FeS_clus_asmbl_HscA"/>
</dbReference>
<dbReference type="NCBIfam" id="NF002399">
    <property type="entry name" value="PRK01433.1"/>
    <property type="match status" value="1"/>
</dbReference>
<dbReference type="PANTHER" id="PTHR19375">
    <property type="entry name" value="HEAT SHOCK PROTEIN 70KDA"/>
    <property type="match status" value="1"/>
</dbReference>
<dbReference type="Pfam" id="PF00012">
    <property type="entry name" value="HSP70"/>
    <property type="match status" value="1"/>
</dbReference>
<dbReference type="PRINTS" id="PR00301">
    <property type="entry name" value="HEATSHOCK70"/>
</dbReference>
<dbReference type="SUPFAM" id="SSF53067">
    <property type="entry name" value="Actin-like ATPase domain"/>
    <property type="match status" value="2"/>
</dbReference>
<dbReference type="SUPFAM" id="SSF100934">
    <property type="entry name" value="Heat shock protein 70kD (HSP70), C-terminal subdomain"/>
    <property type="match status" value="1"/>
</dbReference>
<dbReference type="SUPFAM" id="SSF100920">
    <property type="entry name" value="Heat shock protein 70kD (HSP70), peptide-binding domain"/>
    <property type="match status" value="1"/>
</dbReference>
<dbReference type="PROSITE" id="PS00329">
    <property type="entry name" value="HSP70_2"/>
    <property type="match status" value="1"/>
</dbReference>
<keyword id="KW-0067">ATP-binding</keyword>
<keyword id="KW-0143">Chaperone</keyword>
<keyword id="KW-0547">Nucleotide-binding</keyword>
<protein>
    <recommendedName>
        <fullName evidence="1">Chaperone protein HscA homolog</fullName>
    </recommendedName>
</protein>
<reference key="1">
    <citation type="journal article" date="2009" name="PLoS ONE">
        <title>Genome sequence of the endosymbiont Rickettsia peacockii and comparison with virulent Rickettsia rickettsii: identification of virulence factors.</title>
        <authorList>
            <person name="Felsheim R.F."/>
            <person name="Kurtti T.J."/>
            <person name="Munderloh U.G."/>
        </authorList>
    </citation>
    <scope>NUCLEOTIDE SEQUENCE [LARGE SCALE GENOMIC DNA]</scope>
    <source>
        <strain>Rustic</strain>
    </source>
</reference>
<organism>
    <name type="scientific">Rickettsia peacockii (strain Rustic)</name>
    <dbReference type="NCBI Taxonomy" id="562019"/>
    <lineage>
        <taxon>Bacteria</taxon>
        <taxon>Pseudomonadati</taxon>
        <taxon>Pseudomonadota</taxon>
        <taxon>Alphaproteobacteria</taxon>
        <taxon>Rickettsiales</taxon>
        <taxon>Rickettsiaceae</taxon>
        <taxon>Rickettsieae</taxon>
        <taxon>Rickettsia</taxon>
        <taxon>spotted fever group</taxon>
    </lineage>
</organism>
<name>HSCA_RICPU</name>
<evidence type="ECO:0000255" key="1">
    <source>
        <dbReference type="HAMAP-Rule" id="MF_00679"/>
    </source>
</evidence>
<accession>C4K0Z7</accession>